<comment type="similarity">
    <text evidence="2">Belongs to the FARP (FMRFamide related peptide) family.</text>
</comment>
<protein>
    <recommendedName>
        <fullName>FMRFamide-like neuropeptide RYIRF-amide</fullName>
    </recommendedName>
</protein>
<keyword id="KW-0027">Amidation</keyword>
<keyword id="KW-0903">Direct protein sequencing</keyword>
<keyword id="KW-0527">Neuropeptide</keyword>
<feature type="peptide" id="PRO_0000043654" description="FMRFamide-like neuropeptide RYIRF-amide">
    <location>
        <begin position="1"/>
        <end position="5"/>
    </location>
</feature>
<feature type="modified residue" description="Phenylalanine amide" evidence="1">
    <location>
        <position position="5"/>
    </location>
</feature>
<sequence length="5" mass="754">RYIRF</sequence>
<evidence type="ECO:0000269" key="1">
    <source>
    </source>
</evidence>
<evidence type="ECO:0000305" key="2"/>
<organism>
    <name type="scientific">Arthurdendyus triangulatus</name>
    <name type="common">New Zealand flatworm</name>
    <name type="synonym">Artioposthia triangulata</name>
    <dbReference type="NCBI Taxonomy" id="132421"/>
    <lineage>
        <taxon>Eukaryota</taxon>
        <taxon>Metazoa</taxon>
        <taxon>Spiralia</taxon>
        <taxon>Lophotrochozoa</taxon>
        <taxon>Platyhelminthes</taxon>
        <taxon>Rhabditophora</taxon>
        <taxon>Seriata</taxon>
        <taxon>Tricladida</taxon>
        <taxon>Continenticola</taxon>
        <taxon>Geoplanoidea</taxon>
        <taxon>Geoplanidae</taxon>
        <taxon>Caenoplaninae</taxon>
        <taxon>Arthurdendyus</taxon>
    </lineage>
</organism>
<name>FARP_ARTTR</name>
<accession>P41853</accession>
<proteinExistence type="evidence at protein level"/>
<dbReference type="GO" id="GO:0007218">
    <property type="term" value="P:neuropeptide signaling pathway"/>
    <property type="evidence" value="ECO:0007669"/>
    <property type="project" value="UniProtKB-KW"/>
</dbReference>
<reference key="1">
    <citation type="journal article" date="1994" name="Regul. Pept.">
        <title>RYIRFamide: a turbellarian FMRFamide-related peptide (FaRP).</title>
        <authorList>
            <person name="Maule A.G."/>
            <person name="Shaw C."/>
            <person name="Halton D.W."/>
            <person name="Curry W.J."/>
            <person name="Thim L."/>
        </authorList>
    </citation>
    <scope>PROTEIN SEQUENCE</scope>
    <scope>AMIDATION AT PHE-5</scope>
    <scope>SYNTHESIS</scope>
</reference>